<sequence length="337" mass="37264">AGFAGDDAPRAVFPSIVGRPRHTGVMVGMGQKDAYVGDEAQSKRGILSLKYPIEHGIVSNWDDMEKIWHHTFYNELRVVPEEHPVLLTEAPLNPKANREKMTQIMFETFNTPAMYVAIQAVLSLYASGRTTGIVMGSGDGVSHTVPIYEGYALPHAILRLDLAGRDLTDHLMKILTERGYSFTTTAEREIVRDVKEKLSYIAPDYEQEIIDTTSSSKTVEKTYELPDGQVITIGAERFRCPEVLFQPSIIGMEAAGIHETTYNSIMKCDVDIRKDLYGNIVLSGGTTMFPGIADRMSKEITALAPSSMKIKVVAPPERKYSVWIGGSILASLSTFQL</sequence>
<comment type="function">
    <text>Actins are highly conserved proteins that are involved in various types of cell motility and are ubiquitously expressed in all eukaryotic cells. Essential component of cell cytoskeleton; plays an important role in cytoplasmic streaming, cell shape determination, cell division, organelle movement and extension growth.</text>
</comment>
<comment type="catalytic activity">
    <reaction evidence="1">
        <text>ATP + H2O = ADP + phosphate + H(+)</text>
        <dbReference type="Rhea" id="RHEA:13065"/>
        <dbReference type="ChEBI" id="CHEBI:15377"/>
        <dbReference type="ChEBI" id="CHEBI:15378"/>
        <dbReference type="ChEBI" id="CHEBI:30616"/>
        <dbReference type="ChEBI" id="CHEBI:43474"/>
        <dbReference type="ChEBI" id="CHEBI:456216"/>
    </reaction>
</comment>
<comment type="subcellular location">
    <subcellularLocation>
        <location>Cytoplasm</location>
        <location>Cytoskeleton</location>
    </subcellularLocation>
</comment>
<comment type="miscellaneous">
    <text>There are at least 13 actin genes in potato.</text>
</comment>
<comment type="similarity">
    <text evidence="2">Belongs to the actin family.</text>
</comment>
<name>ACT4_SOLTU</name>
<dbReference type="EC" id="3.6.4.-" evidence="1"/>
<dbReference type="EMBL" id="U60486">
    <property type="protein sequence ID" value="AAB40099.1"/>
    <property type="molecule type" value="Genomic_DNA"/>
</dbReference>
<dbReference type="SMR" id="P93585"/>
<dbReference type="STRING" id="4113.P93585"/>
<dbReference type="InParanoid" id="P93585"/>
<dbReference type="Proteomes" id="UP000011115">
    <property type="component" value="Unassembled WGS sequence"/>
</dbReference>
<dbReference type="ExpressionAtlas" id="P93585">
    <property type="expression patterns" value="baseline"/>
</dbReference>
<dbReference type="GO" id="GO:0015629">
    <property type="term" value="C:actin cytoskeleton"/>
    <property type="evidence" value="ECO:0000318"/>
    <property type="project" value="GO_Central"/>
</dbReference>
<dbReference type="GO" id="GO:0005737">
    <property type="term" value="C:cytoplasm"/>
    <property type="evidence" value="ECO:0007669"/>
    <property type="project" value="UniProtKB-KW"/>
</dbReference>
<dbReference type="GO" id="GO:0005524">
    <property type="term" value="F:ATP binding"/>
    <property type="evidence" value="ECO:0007669"/>
    <property type="project" value="UniProtKB-KW"/>
</dbReference>
<dbReference type="GO" id="GO:0016787">
    <property type="term" value="F:hydrolase activity"/>
    <property type="evidence" value="ECO:0007669"/>
    <property type="project" value="UniProtKB-KW"/>
</dbReference>
<dbReference type="CDD" id="cd10224">
    <property type="entry name" value="ASKHA_NBD_actin"/>
    <property type="match status" value="1"/>
</dbReference>
<dbReference type="FunFam" id="3.30.420.40:FF:000291">
    <property type="entry name" value="Actin, alpha skeletal muscle"/>
    <property type="match status" value="1"/>
</dbReference>
<dbReference type="FunFam" id="3.90.640.10:FF:000001">
    <property type="entry name" value="Actin, muscle"/>
    <property type="match status" value="1"/>
</dbReference>
<dbReference type="FunFam" id="3.30.420.40:FF:000404">
    <property type="entry name" value="Major actin"/>
    <property type="match status" value="1"/>
</dbReference>
<dbReference type="Gene3D" id="3.30.420.40">
    <property type="match status" value="2"/>
</dbReference>
<dbReference type="Gene3D" id="3.90.640.10">
    <property type="entry name" value="Actin, Chain A, domain 4"/>
    <property type="match status" value="1"/>
</dbReference>
<dbReference type="InterPro" id="IPR004000">
    <property type="entry name" value="Actin"/>
</dbReference>
<dbReference type="InterPro" id="IPR020902">
    <property type="entry name" value="Actin/actin-like_CS"/>
</dbReference>
<dbReference type="InterPro" id="IPR004001">
    <property type="entry name" value="Actin_CS"/>
</dbReference>
<dbReference type="InterPro" id="IPR043129">
    <property type="entry name" value="ATPase_NBD"/>
</dbReference>
<dbReference type="PANTHER" id="PTHR11937">
    <property type="entry name" value="ACTIN"/>
    <property type="match status" value="1"/>
</dbReference>
<dbReference type="Pfam" id="PF00022">
    <property type="entry name" value="Actin"/>
    <property type="match status" value="1"/>
</dbReference>
<dbReference type="PRINTS" id="PR00190">
    <property type="entry name" value="ACTIN"/>
</dbReference>
<dbReference type="SMART" id="SM00268">
    <property type="entry name" value="ACTIN"/>
    <property type="match status" value="1"/>
</dbReference>
<dbReference type="SUPFAM" id="SSF53067">
    <property type="entry name" value="Actin-like ATPase domain"/>
    <property type="match status" value="2"/>
</dbReference>
<dbReference type="PROSITE" id="PS00406">
    <property type="entry name" value="ACTINS_1"/>
    <property type="match status" value="1"/>
</dbReference>
<dbReference type="PROSITE" id="PS01132">
    <property type="entry name" value="ACTINS_ACT_LIKE"/>
    <property type="match status" value="1"/>
</dbReference>
<evidence type="ECO:0000250" key="1">
    <source>
        <dbReference type="UniProtKB" id="P68137"/>
    </source>
</evidence>
<evidence type="ECO:0000305" key="2"/>
<protein>
    <recommendedName>
        <fullName>Actin-65</fullName>
        <ecNumber evidence="1">3.6.4.-</ecNumber>
    </recommendedName>
</protein>
<proteinExistence type="inferred from homology"/>
<reference key="1">
    <citation type="journal article" date="1996" name="Mol. Biol. Evol.">
        <title>Phylogeny and substitution rates of angiosperm actin genes.</title>
        <authorList>
            <person name="Moniz de Sa M."/>
            <person name="Drouin G."/>
        </authorList>
    </citation>
    <scope>NUCLEOTIDE SEQUENCE [GENOMIC DNA]</scope>
</reference>
<accession>P93585</accession>
<organism>
    <name type="scientific">Solanum tuberosum</name>
    <name type="common">Potato</name>
    <dbReference type="NCBI Taxonomy" id="4113"/>
    <lineage>
        <taxon>Eukaryota</taxon>
        <taxon>Viridiplantae</taxon>
        <taxon>Streptophyta</taxon>
        <taxon>Embryophyta</taxon>
        <taxon>Tracheophyta</taxon>
        <taxon>Spermatophyta</taxon>
        <taxon>Magnoliopsida</taxon>
        <taxon>eudicotyledons</taxon>
        <taxon>Gunneridae</taxon>
        <taxon>Pentapetalae</taxon>
        <taxon>asterids</taxon>
        <taxon>lamiids</taxon>
        <taxon>Solanales</taxon>
        <taxon>Solanaceae</taxon>
        <taxon>Solanoideae</taxon>
        <taxon>Solaneae</taxon>
        <taxon>Solanum</taxon>
    </lineage>
</organism>
<keyword id="KW-0067">ATP-binding</keyword>
<keyword id="KW-0963">Cytoplasm</keyword>
<keyword id="KW-0206">Cytoskeleton</keyword>
<keyword id="KW-0378">Hydrolase</keyword>
<keyword id="KW-0547">Nucleotide-binding</keyword>
<keyword id="KW-1185">Reference proteome</keyword>
<feature type="chain" id="PRO_0000089011" description="Actin-65">
    <location>
        <begin position="1" status="less than"/>
        <end position="337" status="greater than"/>
    </location>
</feature>
<feature type="non-terminal residue">
    <location>
        <position position="1"/>
    </location>
</feature>
<feature type="non-terminal residue">
    <location>
        <position position="337"/>
    </location>
</feature>